<accession>A0A0A8J9V7</accession>
<reference key="1">
    <citation type="journal article" date="2014" name="Antimicrob. Agents Chemother.">
        <title>Identification of capsular types in carbapenem-resistant Klebsiella pneumoniae strains by wzc sequencing and implications in capsule depolymerase treatment.</title>
        <authorList>
            <person name="Pan Y.-J."/>
            <person name="Lin T.-L."/>
            <person name="Lin Y.-T."/>
            <person name="Su P.-A."/>
            <person name="Chen C.-T."/>
            <person name="Hsieh P.-F."/>
            <person name="Hsu C.-R."/>
            <person name="Chen C.-C."/>
            <person name="Hsieh Y.-C."/>
            <person name="Wang J.-T."/>
        </authorList>
    </citation>
    <scope>NUCLEOTIDE SEQUENCE [LARGE SCALE GENOMIC DNA]</scope>
</reference>
<reference key="2">
    <citation type="journal article" date="2017" name="J. Virol.">
        <title>Klebsiella Phage PhiK64-1 Encodes Multiple Depolymerases for Multiple Host Capsular Types.</title>
        <authorList>
            <person name="Pan Y.-J."/>
            <person name="Lin T.-L."/>
            <person name="Chen C.-C."/>
            <person name="Tsai Y.-T."/>
            <person name="Cheng Y.-H."/>
            <person name="Chen Y.-Y."/>
            <person name="Hsieh P.-F."/>
            <person name="Lin Y.-T."/>
            <person name="Wang J.-T."/>
        </authorList>
    </citation>
    <scope>NUCLEOTIDE SEQUENCE [GENOMIC DNA]</scope>
    <scope>FUNCTION</scope>
</reference>
<reference key="3">
    <citation type="journal article" date="2019" name="Front. Microbiol.">
        <title>Modeling the Architecture of Depolymerase-Containing Receptor Binding Proteins in Klebsiella Phages.</title>
        <authorList>
            <person name="Latka A."/>
            <person name="Leiman P.G."/>
            <person name="Drulis-Kawa Z."/>
            <person name="Briers Y."/>
        </authorList>
    </citation>
    <scope>REVIEW</scope>
</reference>
<proteinExistence type="predicted"/>
<comment type="function">
    <text evidence="1 3">Functions as a receptor binding protein (RBP) and probably mediates the attachment to the host capsular exopolysaccharides (Probable). Displays a depolymerase activity that specifically degrades the K25-type polysaccharides of Klebsiella pneumoniae capsule (PubMed:28077636).</text>
</comment>
<comment type="subcellular location">
    <subcellularLocation>
        <location evidence="2">Virion</location>
    </subcellularLocation>
    <text evidence="2">Tail appendage.</text>
</comment>
<protein>
    <recommendedName>
        <fullName evidence="2">Depolymerase, capsule K25-specific</fullName>
    </recommendedName>
    <alternativeName>
        <fullName evidence="2">Probable tail fiber protein</fullName>
    </alternativeName>
</protein>
<organismHost>
    <name type="scientific">Klebsiella</name>
    <dbReference type="NCBI Taxonomy" id="570"/>
</organismHost>
<feature type="chain" id="PRO_0000458693" description="Depolymerase, capsule K25-specific">
    <location>
        <begin position="1"/>
        <end position="584"/>
    </location>
</feature>
<gene>
    <name evidence="4" type="primary">S2-2</name>
</gene>
<keyword id="KW-1238">Degradation of host capsule during virus entry</keyword>
<keyword id="KW-1235">Degradation of host cell envelope components during virus entry</keyword>
<keyword id="KW-0945">Host-virus interaction</keyword>
<keyword id="KW-1185">Reference proteome</keyword>
<keyword id="KW-1233">Viral attachment to host adhesion receptor</keyword>
<keyword id="KW-1161">Viral attachment to host cell</keyword>
<keyword id="KW-1227">Viral tail protein</keyword>
<keyword id="KW-0946">Virion</keyword>
<keyword id="KW-1160">Virus entry into host cell</keyword>
<dbReference type="EMBL" id="AB897757">
    <property type="protein sequence ID" value="BAQ02839.1"/>
    <property type="molecule type" value="Genomic_DNA"/>
</dbReference>
<dbReference type="EMBL" id="LC121102">
    <property type="protein sequence ID" value="BAW85696.1"/>
    <property type="molecule type" value="Genomic_DNA"/>
</dbReference>
<dbReference type="RefSeq" id="YP_009153199.1">
    <property type="nucleotide sequence ID" value="NC_027399.1"/>
</dbReference>
<dbReference type="SMR" id="A0A0A8J9V7"/>
<dbReference type="OrthoDB" id="29443at10239"/>
<dbReference type="Proteomes" id="UP000202478">
    <property type="component" value="Genome"/>
</dbReference>
<dbReference type="GO" id="GO:0098015">
    <property type="term" value="C:virus tail"/>
    <property type="evidence" value="ECO:0007669"/>
    <property type="project" value="UniProtKB-KW"/>
</dbReference>
<dbReference type="GO" id="GO:0098671">
    <property type="term" value="P:adhesion receptor-mediated virion attachment to host cell"/>
    <property type="evidence" value="ECO:0007669"/>
    <property type="project" value="UniProtKB-KW"/>
</dbReference>
<dbReference type="GO" id="GO:0098994">
    <property type="term" value="P:symbiont entry into host cell via disruption of host cell envelope"/>
    <property type="evidence" value="ECO:0007669"/>
    <property type="project" value="UniProtKB-KW"/>
</dbReference>
<dbReference type="GO" id="GO:0098996">
    <property type="term" value="P:symbiont entry into host cell via disruption of host cell glycocalyx"/>
    <property type="evidence" value="ECO:0000314"/>
    <property type="project" value="UniProtKB"/>
</dbReference>
<dbReference type="Gene3D" id="3.30.2020.50">
    <property type="match status" value="1"/>
</dbReference>
<dbReference type="Gene3D" id="2.160.20.10">
    <property type="entry name" value="Single-stranded right-handed beta-helix, Pectin lyase-like"/>
    <property type="match status" value="1"/>
</dbReference>
<dbReference type="InterPro" id="IPR039448">
    <property type="entry name" value="Beta_helix"/>
</dbReference>
<dbReference type="InterPro" id="IPR012334">
    <property type="entry name" value="Pectin_lyas_fold"/>
</dbReference>
<dbReference type="InterPro" id="IPR011050">
    <property type="entry name" value="Pectin_lyase_fold/virulence"/>
</dbReference>
<dbReference type="Pfam" id="PF13229">
    <property type="entry name" value="Beta_helix"/>
    <property type="match status" value="1"/>
</dbReference>
<dbReference type="SUPFAM" id="SSF51126">
    <property type="entry name" value="Pectin lyase-like"/>
    <property type="match status" value="1"/>
</dbReference>
<evidence type="ECO:0000269" key="1">
    <source>
    </source>
</evidence>
<evidence type="ECO:0000305" key="2"/>
<evidence type="ECO:0000305" key="3">
    <source>
    </source>
</evidence>
<evidence type="ECO:0000312" key="4">
    <source>
        <dbReference type="EMBL" id="BAW85696.1"/>
    </source>
</evidence>
<organism>
    <name type="scientific">Klebsiella phage K64-1</name>
    <name type="common">Bacteriophage K64-1</name>
    <dbReference type="NCBI Taxonomy" id="1439894"/>
    <lineage>
        <taxon>Viruses</taxon>
        <taxon>Duplodnaviria</taxon>
        <taxon>Heunggongvirae</taxon>
        <taxon>Uroviricota</taxon>
        <taxon>Caudoviricetes</taxon>
        <taxon>Alcyoneusvirus</taxon>
        <taxon>Alcyoneusvirus K641</taxon>
    </lineage>
</organism>
<name>DPO22_BPK64</name>
<sequence>MGNFIQPKGSTSTEIAREILSKTYSINYSEIDFIKQNLSVNGLKLLIDPNTQYIWGTISSLETGTISSWSIDSTGEIMTVLTTNGTLTLRKISVSTSTTTANSIYNFMTSDDIYNIKNVVGIEINVDYALQKAINSGLMSIYYPPSKGIYVHSNVCTLPSGFNMYGQSRKPYTVSNDASFNNCGTVIRLASGSPGIFVLSGRHTFDNIVFDGRNNTVGSMNATSQVSGCRFEKCGFYRWGIGLGRTSGYVATVYARGCNFSGNNTAMQDWIDSRAVDCTINAQVSRGIAMRTGANNNAWVGCRVEWNGTDGFYFYQSVGNVITGELIDRNGYAGITVADGASVSVTTCSIQRNGRISSNTNNGANILINDSGIILLNGNRFTSGVDDGGTGVLTPDYDIICAGGTGKILIASGNSFSGGNLGYMKEVTIANKVITGNYGLPDIVNTGTYQKSSGLVKMGNTSTGTLPPAASNGTLTLSLSRPAMTQYMIPQKIVLEISARDTIGGRAEYFTVPLLCSWESTVPVINMISSKLDTYPDNVWGPSTNTPTGVQVSVSTTSDGSTITINLVSMDTRNRQIQAYIRGA</sequence>